<name>CK086_HUMAN</name>
<accession>A6NJI1</accession>
<reference key="1">
    <citation type="journal article" date="2004" name="Nat. Genet.">
        <title>Complete sequencing and characterization of 21,243 full-length human cDNAs.</title>
        <authorList>
            <person name="Ota T."/>
            <person name="Suzuki Y."/>
            <person name="Nishikawa T."/>
            <person name="Otsuki T."/>
            <person name="Sugiyama T."/>
            <person name="Irie R."/>
            <person name="Wakamatsu A."/>
            <person name="Hayashi K."/>
            <person name="Sato H."/>
            <person name="Nagai K."/>
            <person name="Kimura K."/>
            <person name="Makita H."/>
            <person name="Sekine M."/>
            <person name="Obayashi M."/>
            <person name="Nishi T."/>
            <person name="Shibahara T."/>
            <person name="Tanaka T."/>
            <person name="Ishii S."/>
            <person name="Yamamoto J."/>
            <person name="Saito K."/>
            <person name="Kawai Y."/>
            <person name="Isono Y."/>
            <person name="Nakamura Y."/>
            <person name="Nagahari K."/>
            <person name="Murakami K."/>
            <person name="Yasuda T."/>
            <person name="Iwayanagi T."/>
            <person name="Wagatsuma M."/>
            <person name="Shiratori A."/>
            <person name="Sudo H."/>
            <person name="Hosoiri T."/>
            <person name="Kaku Y."/>
            <person name="Kodaira H."/>
            <person name="Kondo H."/>
            <person name="Sugawara M."/>
            <person name="Takahashi M."/>
            <person name="Kanda K."/>
            <person name="Yokoi T."/>
            <person name="Furuya T."/>
            <person name="Kikkawa E."/>
            <person name="Omura Y."/>
            <person name="Abe K."/>
            <person name="Kamihara K."/>
            <person name="Katsuta N."/>
            <person name="Sato K."/>
            <person name="Tanikawa M."/>
            <person name="Yamazaki M."/>
            <person name="Ninomiya K."/>
            <person name="Ishibashi T."/>
            <person name="Yamashita H."/>
            <person name="Murakawa K."/>
            <person name="Fujimori K."/>
            <person name="Tanai H."/>
            <person name="Kimata M."/>
            <person name="Watanabe M."/>
            <person name="Hiraoka S."/>
            <person name="Chiba Y."/>
            <person name="Ishida S."/>
            <person name="Ono Y."/>
            <person name="Takiguchi S."/>
            <person name="Watanabe S."/>
            <person name="Yosida M."/>
            <person name="Hotuta T."/>
            <person name="Kusano J."/>
            <person name="Kanehori K."/>
            <person name="Takahashi-Fujii A."/>
            <person name="Hara H."/>
            <person name="Tanase T.-O."/>
            <person name="Nomura Y."/>
            <person name="Togiya S."/>
            <person name="Komai F."/>
            <person name="Hara R."/>
            <person name="Takeuchi K."/>
            <person name="Arita M."/>
            <person name="Imose N."/>
            <person name="Musashino K."/>
            <person name="Yuuki H."/>
            <person name="Oshima A."/>
            <person name="Sasaki N."/>
            <person name="Aotsuka S."/>
            <person name="Yoshikawa Y."/>
            <person name="Matsunawa H."/>
            <person name="Ichihara T."/>
            <person name="Shiohata N."/>
            <person name="Sano S."/>
            <person name="Moriya S."/>
            <person name="Momiyama H."/>
            <person name="Satoh N."/>
            <person name="Takami S."/>
            <person name="Terashima Y."/>
            <person name="Suzuki O."/>
            <person name="Nakagawa S."/>
            <person name="Senoh A."/>
            <person name="Mizoguchi H."/>
            <person name="Goto Y."/>
            <person name="Shimizu F."/>
            <person name="Wakebe H."/>
            <person name="Hishigaki H."/>
            <person name="Watanabe T."/>
            <person name="Sugiyama A."/>
            <person name="Takemoto M."/>
            <person name="Kawakami B."/>
            <person name="Yamazaki M."/>
            <person name="Watanabe K."/>
            <person name="Kumagai A."/>
            <person name="Itakura S."/>
            <person name="Fukuzumi Y."/>
            <person name="Fujimori Y."/>
            <person name="Komiyama M."/>
            <person name="Tashiro H."/>
            <person name="Tanigami A."/>
            <person name="Fujiwara T."/>
            <person name="Ono T."/>
            <person name="Yamada K."/>
            <person name="Fujii Y."/>
            <person name="Ozaki K."/>
            <person name="Hirao M."/>
            <person name="Ohmori Y."/>
            <person name="Kawabata A."/>
            <person name="Hikiji T."/>
            <person name="Kobatake N."/>
            <person name="Inagaki H."/>
            <person name="Ikema Y."/>
            <person name="Okamoto S."/>
            <person name="Okitani R."/>
            <person name="Kawakami T."/>
            <person name="Noguchi S."/>
            <person name="Itoh T."/>
            <person name="Shigeta K."/>
            <person name="Senba T."/>
            <person name="Matsumura K."/>
            <person name="Nakajima Y."/>
            <person name="Mizuno T."/>
            <person name="Morinaga M."/>
            <person name="Sasaki M."/>
            <person name="Togashi T."/>
            <person name="Oyama M."/>
            <person name="Hata H."/>
            <person name="Watanabe M."/>
            <person name="Komatsu T."/>
            <person name="Mizushima-Sugano J."/>
            <person name="Satoh T."/>
            <person name="Shirai Y."/>
            <person name="Takahashi Y."/>
            <person name="Nakagawa K."/>
            <person name="Okumura K."/>
            <person name="Nagase T."/>
            <person name="Nomura N."/>
            <person name="Kikuchi H."/>
            <person name="Masuho Y."/>
            <person name="Yamashita R."/>
            <person name="Nakai K."/>
            <person name="Yada T."/>
            <person name="Nakamura Y."/>
            <person name="Ohara O."/>
            <person name="Isogai T."/>
            <person name="Sugano S."/>
        </authorList>
    </citation>
    <scope>NUCLEOTIDE SEQUENCE [LARGE SCALE MRNA]</scope>
    <source>
        <tissue>Small intestine</tissue>
    </source>
</reference>
<reference key="2">
    <citation type="journal article" date="2006" name="Nature">
        <title>Human chromosome 11 DNA sequence and analysis including novel gene identification.</title>
        <authorList>
            <person name="Taylor T.D."/>
            <person name="Noguchi H."/>
            <person name="Totoki Y."/>
            <person name="Toyoda A."/>
            <person name="Kuroki Y."/>
            <person name="Dewar K."/>
            <person name="Lloyd C."/>
            <person name="Itoh T."/>
            <person name="Takeda T."/>
            <person name="Kim D.-W."/>
            <person name="She X."/>
            <person name="Barlow K.F."/>
            <person name="Bloom T."/>
            <person name="Bruford E."/>
            <person name="Chang J.L."/>
            <person name="Cuomo C.A."/>
            <person name="Eichler E."/>
            <person name="FitzGerald M.G."/>
            <person name="Jaffe D.B."/>
            <person name="LaButti K."/>
            <person name="Nicol R."/>
            <person name="Park H.-S."/>
            <person name="Seaman C."/>
            <person name="Sougnez C."/>
            <person name="Yang X."/>
            <person name="Zimmer A.R."/>
            <person name="Zody M.C."/>
            <person name="Birren B.W."/>
            <person name="Nusbaum C."/>
            <person name="Fujiyama A."/>
            <person name="Hattori M."/>
            <person name="Rogers J."/>
            <person name="Lander E.S."/>
            <person name="Sakaki Y."/>
        </authorList>
    </citation>
    <scope>NUCLEOTIDE SEQUENCE [LARGE SCALE GENOMIC DNA]</scope>
</reference>
<gene>
    <name type="primary">C11orf86</name>
</gene>
<sequence length="115" mass="13172">MGTGLRSQSLREPRPSYGKLQEPWGRPQEGQLRRALSLRQGQEKSRSQGLERGTEGPDATAQERVPGSLGDTEQLIQAQRRGSRWWLRRYQQVRRRWESFVAIFPSVTLSQPASP</sequence>
<feature type="chain" id="PRO_0000328809" description="Uncharacterized protein C11orf86">
    <location>
        <begin position="1"/>
        <end position="115"/>
    </location>
</feature>
<feature type="region of interest" description="Disordered" evidence="1">
    <location>
        <begin position="1"/>
        <end position="74"/>
    </location>
</feature>
<protein>
    <recommendedName>
        <fullName>Uncharacterized protein C11orf86</fullName>
    </recommendedName>
</protein>
<organism>
    <name type="scientific">Homo sapiens</name>
    <name type="common">Human</name>
    <dbReference type="NCBI Taxonomy" id="9606"/>
    <lineage>
        <taxon>Eukaryota</taxon>
        <taxon>Metazoa</taxon>
        <taxon>Chordata</taxon>
        <taxon>Craniata</taxon>
        <taxon>Vertebrata</taxon>
        <taxon>Euteleostomi</taxon>
        <taxon>Mammalia</taxon>
        <taxon>Eutheria</taxon>
        <taxon>Euarchontoglires</taxon>
        <taxon>Primates</taxon>
        <taxon>Haplorrhini</taxon>
        <taxon>Catarrhini</taxon>
        <taxon>Hominidae</taxon>
        <taxon>Homo</taxon>
    </lineage>
</organism>
<dbReference type="EMBL" id="AK026328">
    <property type="status" value="NOT_ANNOTATED_CDS"/>
    <property type="molecule type" value="mRNA"/>
</dbReference>
<dbReference type="EMBL" id="AP003176">
    <property type="status" value="NOT_ANNOTATED_CDS"/>
    <property type="molecule type" value="Genomic_DNA"/>
</dbReference>
<dbReference type="CCDS" id="CCDS44656.1"/>
<dbReference type="RefSeq" id="NP_001129957.1">
    <property type="nucleotide sequence ID" value="NM_001136485.3"/>
</dbReference>
<dbReference type="STRING" id="9606.ENSP00000311479"/>
<dbReference type="iPTMnet" id="A6NJI1"/>
<dbReference type="PhosphoSitePlus" id="A6NJI1"/>
<dbReference type="BioMuta" id="C11orf86"/>
<dbReference type="MassIVE" id="A6NJI1"/>
<dbReference type="PaxDb" id="9606-ENSP00000311479"/>
<dbReference type="PeptideAtlas" id="A6NJI1"/>
<dbReference type="Antibodypedia" id="52590">
    <property type="antibodies" value="7 antibodies from 6 providers"/>
</dbReference>
<dbReference type="DNASU" id="254439"/>
<dbReference type="Ensembl" id="ENST00000308963.4">
    <property type="protein sequence ID" value="ENSP00000311479.4"/>
    <property type="gene ID" value="ENSG00000173237.5"/>
</dbReference>
<dbReference type="GeneID" id="254439"/>
<dbReference type="KEGG" id="hsa:254439"/>
<dbReference type="UCSC" id="uc010rpm.3">
    <property type="organism name" value="human"/>
</dbReference>
<dbReference type="AGR" id="HGNC:34442"/>
<dbReference type="CTD" id="254439"/>
<dbReference type="GeneCards" id="C11orf86"/>
<dbReference type="HGNC" id="HGNC:34442">
    <property type="gene designation" value="C11orf86"/>
</dbReference>
<dbReference type="HPA" id="ENSG00000173237">
    <property type="expression patterns" value="Tissue enriched (intestine)"/>
</dbReference>
<dbReference type="neXtProt" id="NX_A6NJI1"/>
<dbReference type="OpenTargets" id="ENSG00000173237"/>
<dbReference type="PharmGKB" id="PA162377813"/>
<dbReference type="VEuPathDB" id="HostDB:ENSG00000173237"/>
<dbReference type="eggNOG" id="ENOG502SY9F">
    <property type="taxonomic scope" value="Eukaryota"/>
</dbReference>
<dbReference type="GeneTree" id="ENSGT00390000012120"/>
<dbReference type="HOGENOM" id="CLU_164853_0_0_1"/>
<dbReference type="InParanoid" id="A6NJI1"/>
<dbReference type="OMA" id="WLKQYQQ"/>
<dbReference type="OrthoDB" id="9447782at2759"/>
<dbReference type="PAN-GO" id="A6NJI1">
    <property type="GO annotations" value="0 GO annotations based on evolutionary models"/>
</dbReference>
<dbReference type="PhylomeDB" id="A6NJI1"/>
<dbReference type="TreeFam" id="TF336876"/>
<dbReference type="PathwayCommons" id="A6NJI1"/>
<dbReference type="SignaLink" id="A6NJI1"/>
<dbReference type="BioGRID-ORCS" id="254439">
    <property type="hits" value="7 hits in 1111 CRISPR screens"/>
</dbReference>
<dbReference type="GenomeRNAi" id="254439"/>
<dbReference type="Pharos" id="A6NJI1">
    <property type="development level" value="Tdark"/>
</dbReference>
<dbReference type="PRO" id="PR:A6NJI1"/>
<dbReference type="Proteomes" id="UP000005640">
    <property type="component" value="Chromosome 11"/>
</dbReference>
<dbReference type="RNAct" id="A6NJI1">
    <property type="molecule type" value="protein"/>
</dbReference>
<dbReference type="Bgee" id="ENSG00000173237">
    <property type="expression patterns" value="Expressed in ileal mucosa and 46 other cell types or tissues"/>
</dbReference>
<dbReference type="InterPro" id="IPR027990">
    <property type="entry name" value="DUF4633"/>
</dbReference>
<dbReference type="PANTHER" id="PTHR31831">
    <property type="entry name" value="HYPOTHETICAL PROTEIN LOC689065"/>
    <property type="match status" value="1"/>
</dbReference>
<dbReference type="PANTHER" id="PTHR31831:SF1">
    <property type="entry name" value="RIKEN CDNA 2010003K11 GENE"/>
    <property type="match status" value="1"/>
</dbReference>
<dbReference type="Pfam" id="PF15464">
    <property type="entry name" value="DUF4633"/>
    <property type="match status" value="1"/>
</dbReference>
<proteinExistence type="evidence at protein level"/>
<keyword id="KW-1267">Proteomics identification</keyword>
<keyword id="KW-1185">Reference proteome</keyword>
<evidence type="ECO:0000256" key="1">
    <source>
        <dbReference type="SAM" id="MobiDB-lite"/>
    </source>
</evidence>